<accession>Q8Z9K0</accession>
<keyword id="KW-0050">Antiport</keyword>
<keyword id="KW-0997">Cell inner membrane</keyword>
<keyword id="KW-1003">Cell membrane</keyword>
<keyword id="KW-0406">Ion transport</keyword>
<keyword id="KW-0472">Membrane</keyword>
<keyword id="KW-0630">Potassium</keyword>
<keyword id="KW-0633">Potassium transport</keyword>
<keyword id="KW-0812">Transmembrane</keyword>
<keyword id="KW-1133">Transmembrane helix</keyword>
<keyword id="KW-0813">Transport</keyword>
<name>KEFC_SALTI</name>
<organism>
    <name type="scientific">Salmonella typhi</name>
    <dbReference type="NCBI Taxonomy" id="90370"/>
    <lineage>
        <taxon>Bacteria</taxon>
        <taxon>Pseudomonadati</taxon>
        <taxon>Pseudomonadota</taxon>
        <taxon>Gammaproteobacteria</taxon>
        <taxon>Enterobacterales</taxon>
        <taxon>Enterobacteriaceae</taxon>
        <taxon>Salmonella</taxon>
    </lineage>
</organism>
<proteinExistence type="inferred from homology"/>
<protein>
    <recommendedName>
        <fullName evidence="2">Glutathione-regulated potassium-efflux system protein KefC</fullName>
    </recommendedName>
    <alternativeName>
        <fullName evidence="2">K(+)/H(+) antiporter</fullName>
    </alternativeName>
</protein>
<gene>
    <name evidence="2" type="primary">kefC</name>
    <name type="ordered locus">STY0101</name>
    <name type="ordered locus">t0089</name>
</gene>
<reference key="1">
    <citation type="journal article" date="2001" name="Nature">
        <title>Complete genome sequence of a multiple drug resistant Salmonella enterica serovar Typhi CT18.</title>
        <authorList>
            <person name="Parkhill J."/>
            <person name="Dougan G."/>
            <person name="James K.D."/>
            <person name="Thomson N.R."/>
            <person name="Pickard D."/>
            <person name="Wain J."/>
            <person name="Churcher C.M."/>
            <person name="Mungall K.L."/>
            <person name="Bentley S.D."/>
            <person name="Holden M.T.G."/>
            <person name="Sebaihia M."/>
            <person name="Baker S."/>
            <person name="Basham D."/>
            <person name="Brooks K."/>
            <person name="Chillingworth T."/>
            <person name="Connerton P."/>
            <person name="Cronin A."/>
            <person name="Davis P."/>
            <person name="Davies R.M."/>
            <person name="Dowd L."/>
            <person name="White N."/>
            <person name="Farrar J."/>
            <person name="Feltwell T."/>
            <person name="Hamlin N."/>
            <person name="Haque A."/>
            <person name="Hien T.T."/>
            <person name="Holroyd S."/>
            <person name="Jagels K."/>
            <person name="Krogh A."/>
            <person name="Larsen T.S."/>
            <person name="Leather S."/>
            <person name="Moule S."/>
            <person name="O'Gaora P."/>
            <person name="Parry C."/>
            <person name="Quail M.A."/>
            <person name="Rutherford K.M."/>
            <person name="Simmonds M."/>
            <person name="Skelton J."/>
            <person name="Stevens K."/>
            <person name="Whitehead S."/>
            <person name="Barrell B.G."/>
        </authorList>
    </citation>
    <scope>NUCLEOTIDE SEQUENCE [LARGE SCALE GENOMIC DNA]</scope>
    <source>
        <strain>CT18</strain>
    </source>
</reference>
<reference key="2">
    <citation type="journal article" date="2003" name="J. Bacteriol.">
        <title>Comparative genomics of Salmonella enterica serovar Typhi strains Ty2 and CT18.</title>
        <authorList>
            <person name="Deng W."/>
            <person name="Liou S.-R."/>
            <person name="Plunkett G. III"/>
            <person name="Mayhew G.F."/>
            <person name="Rose D.J."/>
            <person name="Burland V."/>
            <person name="Kodoyianni V."/>
            <person name="Schwartz D.C."/>
            <person name="Blattner F.R."/>
        </authorList>
    </citation>
    <scope>NUCLEOTIDE SEQUENCE [LARGE SCALE GENOMIC DNA]</scope>
    <source>
        <strain>ATCC 700931 / Ty2</strain>
    </source>
</reference>
<feature type="chain" id="PRO_0000196611" description="Glutathione-regulated potassium-efflux system protein KefC">
    <location>
        <begin position="1"/>
        <end position="620"/>
    </location>
</feature>
<feature type="topological domain" description="Periplasmic" evidence="1">
    <location>
        <begin position="1"/>
        <end position="3"/>
    </location>
</feature>
<feature type="transmembrane region" description="Helical" evidence="2">
    <location>
        <begin position="4"/>
        <end position="24"/>
    </location>
</feature>
<feature type="topological domain" description="Cytoplasmic" evidence="1">
    <location>
        <position position="25"/>
    </location>
</feature>
<feature type="transmembrane region" description="Helical" evidence="2">
    <location>
        <begin position="26"/>
        <end position="46"/>
    </location>
</feature>
<feature type="topological domain" description="Periplasmic" evidence="1">
    <location>
        <begin position="47"/>
        <end position="53"/>
    </location>
</feature>
<feature type="transmembrane region" description="Helical" evidence="2">
    <location>
        <begin position="54"/>
        <end position="74"/>
    </location>
</feature>
<feature type="topological domain" description="Cytoplasmic" evidence="1">
    <location>
        <begin position="75"/>
        <end position="89"/>
    </location>
</feature>
<feature type="transmembrane region" description="Helical" evidence="2">
    <location>
        <begin position="90"/>
        <end position="110"/>
    </location>
</feature>
<feature type="topological domain" description="Periplasmic" evidence="1">
    <location>
        <begin position="111"/>
        <end position="113"/>
    </location>
</feature>
<feature type="transmembrane region" description="Helical" evidence="2">
    <location>
        <begin position="114"/>
        <end position="134"/>
    </location>
</feature>
<feature type="topological domain" description="Cytoplasmic" evidence="1">
    <location>
        <begin position="135"/>
        <end position="148"/>
    </location>
</feature>
<feature type="transmembrane region" description="Helical" evidence="2">
    <location>
        <begin position="149"/>
        <end position="169"/>
    </location>
</feature>
<feature type="topological domain" description="Periplasmic" evidence="1">
    <location>
        <begin position="170"/>
        <end position="177"/>
    </location>
</feature>
<feature type="transmembrane region" description="Helical" evidence="2">
    <location>
        <begin position="178"/>
        <end position="198"/>
    </location>
</feature>
<feature type="topological domain" description="Cytoplasmic" evidence="1">
    <location>
        <begin position="199"/>
        <end position="213"/>
    </location>
</feature>
<feature type="transmembrane region" description="Helical" evidence="2">
    <location>
        <begin position="214"/>
        <end position="233"/>
    </location>
</feature>
<feature type="topological domain" description="Periplasmic" evidence="1">
    <location>
        <begin position="234"/>
        <end position="236"/>
    </location>
</feature>
<feature type="transmembrane region" description="Helical" evidence="2">
    <location>
        <begin position="237"/>
        <end position="254"/>
    </location>
</feature>
<feature type="topological domain" description="Cytoplasmic" evidence="1">
    <location>
        <begin position="255"/>
        <end position="269"/>
    </location>
</feature>
<feature type="transmembrane region" description="Helical" evidence="2">
    <location>
        <begin position="270"/>
        <end position="290"/>
    </location>
</feature>
<feature type="topological domain" description="Periplasmic" evidence="1">
    <location>
        <begin position="291"/>
        <end position="293"/>
    </location>
</feature>
<feature type="transmembrane region" description="Helical" evidence="2">
    <location>
        <begin position="294"/>
        <end position="314"/>
    </location>
</feature>
<feature type="topological domain" description="Cytoplasmic" evidence="1">
    <location>
        <begin position="315"/>
        <end position="326"/>
    </location>
</feature>
<feature type="transmembrane region" description="Helical" evidence="2">
    <location>
        <begin position="327"/>
        <end position="347"/>
    </location>
</feature>
<feature type="topological domain" description="Periplasmic" evidence="1">
    <location>
        <begin position="348"/>
        <end position="358"/>
    </location>
</feature>
<feature type="transmembrane region" description="Helical" evidence="2">
    <location>
        <begin position="359"/>
        <end position="379"/>
    </location>
</feature>
<feature type="topological domain" description="Cytoplasmic" evidence="1">
    <location>
        <begin position="380"/>
        <end position="620"/>
    </location>
</feature>
<feature type="domain" description="RCK N-terminal" evidence="3">
    <location>
        <begin position="399"/>
        <end position="518"/>
    </location>
</feature>
<feature type="region of interest" description="Disordered" evidence="4">
    <location>
        <begin position="599"/>
        <end position="620"/>
    </location>
</feature>
<feature type="compositionally biased region" description="Basic and acidic residues" evidence="4">
    <location>
        <begin position="603"/>
        <end position="620"/>
    </location>
</feature>
<dbReference type="EMBL" id="AL513382">
    <property type="protein sequence ID" value="CAD01242.1"/>
    <property type="molecule type" value="Genomic_DNA"/>
</dbReference>
<dbReference type="EMBL" id="AE014613">
    <property type="protein sequence ID" value="AAO67822.1"/>
    <property type="molecule type" value="Genomic_DNA"/>
</dbReference>
<dbReference type="RefSeq" id="NP_454698.1">
    <property type="nucleotide sequence ID" value="NC_003198.1"/>
</dbReference>
<dbReference type="RefSeq" id="WP_000377172.1">
    <property type="nucleotide sequence ID" value="NZ_WSUR01000028.1"/>
</dbReference>
<dbReference type="SMR" id="Q8Z9K0"/>
<dbReference type="STRING" id="220341.gene:17584144"/>
<dbReference type="KEGG" id="stt:t0089"/>
<dbReference type="KEGG" id="sty:STY0101"/>
<dbReference type="PATRIC" id="fig|220341.7.peg.100"/>
<dbReference type="eggNOG" id="COG0475">
    <property type="taxonomic scope" value="Bacteria"/>
</dbReference>
<dbReference type="eggNOG" id="COG1226">
    <property type="taxonomic scope" value="Bacteria"/>
</dbReference>
<dbReference type="HOGENOM" id="CLU_005126_9_3_6"/>
<dbReference type="OMA" id="TFIGANQ"/>
<dbReference type="OrthoDB" id="9781411at2"/>
<dbReference type="Proteomes" id="UP000000541">
    <property type="component" value="Chromosome"/>
</dbReference>
<dbReference type="Proteomes" id="UP000002670">
    <property type="component" value="Chromosome"/>
</dbReference>
<dbReference type="GO" id="GO:0005886">
    <property type="term" value="C:plasma membrane"/>
    <property type="evidence" value="ECO:0007669"/>
    <property type="project" value="UniProtKB-SubCell"/>
</dbReference>
<dbReference type="GO" id="GO:0019899">
    <property type="term" value="F:enzyme binding"/>
    <property type="evidence" value="ECO:0007669"/>
    <property type="project" value="InterPro"/>
</dbReference>
<dbReference type="GO" id="GO:0015503">
    <property type="term" value="F:glutathione-regulated potassium exporter activity"/>
    <property type="evidence" value="ECO:0007669"/>
    <property type="project" value="UniProtKB-UniRule"/>
</dbReference>
<dbReference type="GO" id="GO:0015643">
    <property type="term" value="F:toxic substance binding"/>
    <property type="evidence" value="ECO:0007669"/>
    <property type="project" value="InterPro"/>
</dbReference>
<dbReference type="GO" id="GO:1902600">
    <property type="term" value="P:proton transmembrane transport"/>
    <property type="evidence" value="ECO:0007669"/>
    <property type="project" value="InterPro"/>
</dbReference>
<dbReference type="GO" id="GO:0051595">
    <property type="term" value="P:response to methylglyoxal"/>
    <property type="evidence" value="ECO:0007669"/>
    <property type="project" value="InterPro"/>
</dbReference>
<dbReference type="FunFam" id="1.20.1530.20:FF:000001">
    <property type="entry name" value="Glutathione-regulated potassium-efflux system protein KefB"/>
    <property type="match status" value="1"/>
</dbReference>
<dbReference type="FunFam" id="3.40.50.720:FF:000036">
    <property type="entry name" value="Glutathione-regulated potassium-efflux system protein KefB"/>
    <property type="match status" value="1"/>
</dbReference>
<dbReference type="Gene3D" id="1.20.1530.20">
    <property type="match status" value="1"/>
</dbReference>
<dbReference type="Gene3D" id="3.40.50.720">
    <property type="entry name" value="NAD(P)-binding Rossmann-like Domain"/>
    <property type="match status" value="1"/>
</dbReference>
<dbReference type="HAMAP" id="MF_01413">
    <property type="entry name" value="K_H_efflux_KefC"/>
    <property type="match status" value="1"/>
</dbReference>
<dbReference type="InterPro" id="IPR006153">
    <property type="entry name" value="Cation/H_exchanger_TM"/>
</dbReference>
<dbReference type="InterPro" id="IPR004771">
    <property type="entry name" value="K/H_exchanger"/>
</dbReference>
<dbReference type="InterPro" id="IPR023941">
    <property type="entry name" value="K_H_efflux_KefC"/>
</dbReference>
<dbReference type="InterPro" id="IPR006036">
    <property type="entry name" value="K_uptake_TrkA"/>
</dbReference>
<dbReference type="InterPro" id="IPR038770">
    <property type="entry name" value="Na+/solute_symporter_sf"/>
</dbReference>
<dbReference type="InterPro" id="IPR036291">
    <property type="entry name" value="NAD(P)-bd_dom_sf"/>
</dbReference>
<dbReference type="InterPro" id="IPR003148">
    <property type="entry name" value="RCK_N"/>
</dbReference>
<dbReference type="NCBIfam" id="TIGR00932">
    <property type="entry name" value="2a37"/>
    <property type="match status" value="1"/>
</dbReference>
<dbReference type="NCBIfam" id="NF002924">
    <property type="entry name" value="PRK03562.1"/>
    <property type="match status" value="1"/>
</dbReference>
<dbReference type="PANTHER" id="PTHR46157:SF3">
    <property type="entry name" value="GLUTATHIONE-REGULATED POTASSIUM-EFFLUX SYSTEM PROTEIN KEFC"/>
    <property type="match status" value="1"/>
</dbReference>
<dbReference type="PANTHER" id="PTHR46157">
    <property type="entry name" value="K(+) EFFLUX ANTIPORTER 3, CHLOROPLASTIC"/>
    <property type="match status" value="1"/>
</dbReference>
<dbReference type="Pfam" id="PF00999">
    <property type="entry name" value="Na_H_Exchanger"/>
    <property type="match status" value="1"/>
</dbReference>
<dbReference type="Pfam" id="PF02254">
    <property type="entry name" value="TrkA_N"/>
    <property type="match status" value="1"/>
</dbReference>
<dbReference type="PRINTS" id="PR00335">
    <property type="entry name" value="KUPTAKETRKA"/>
</dbReference>
<dbReference type="SUPFAM" id="SSF51735">
    <property type="entry name" value="NAD(P)-binding Rossmann-fold domains"/>
    <property type="match status" value="1"/>
</dbReference>
<dbReference type="PROSITE" id="PS51201">
    <property type="entry name" value="RCK_N"/>
    <property type="match status" value="1"/>
</dbReference>
<evidence type="ECO:0000255" key="1"/>
<evidence type="ECO:0000255" key="2">
    <source>
        <dbReference type="HAMAP-Rule" id="MF_01413"/>
    </source>
</evidence>
<evidence type="ECO:0000255" key="3">
    <source>
        <dbReference type="PROSITE-ProRule" id="PRU00543"/>
    </source>
</evidence>
<evidence type="ECO:0000256" key="4">
    <source>
        <dbReference type="SAM" id="MobiDB-lite"/>
    </source>
</evidence>
<comment type="function">
    <text evidence="2">Pore-forming subunit of a potassium efflux system that confers protection against electrophiles. Catalyzes K(+)/H(+) antiport.</text>
</comment>
<comment type="subunit">
    <text evidence="2">Homodimer. Interacts with the regulatory subunit KefF.</text>
</comment>
<comment type="subcellular location">
    <subcellularLocation>
        <location evidence="2">Cell inner membrane</location>
        <topology evidence="2">Multi-pass membrane protein</topology>
    </subcellularLocation>
</comment>
<comment type="similarity">
    <text evidence="2">Belongs to the monovalent cation:proton antiporter 2 (CPA2) transporter (TC 2.A.37) family. KefC subfamily.</text>
</comment>
<sequence length="620" mass="67032">MDSHTLLQALIYLGSAALIVPIAVRLGLGSVLGYLIAGCIIGPWGLRLVTDAESILHFAEIGVVLMLFVIGLELDPQRLWKLRASVFGGGALQMVVCGGLIGLFCMFLGLRWQVAELIGMTLALSSTAIAMQAMNERNLTVSQVGRSAFAVLLFQDIAAIPLVAMIPLLAASGASTTLGAFALSALKVAGALALVVLLGRYVTRPALRFVARSGLREVFSAVALFLVFGFGLLLEEVGLSMAMGAFLAGVLLASSEYRHALESDIEPFKGLLLGLFFIGVGMSIDFGTLVENPLRILLLLAGFLAIKIVMLWLVARTLGVPAKQRRWFAVLLGQGSEFAFVVFGAAQMADVLEPEWAKALTLAVALSMAATPIFLVLLTRMEKTATGEAREADEIDEEQPRVIVAGFGRFGQIAGRLLLSSGVKMVVLDHDPDHIETLRKFGMKVFYGDATRMDLLESAGAAKAEVLINAIDDPQTNLQLSELVKTHFPHLQIIARARDVDHYIRLRQAGVAMPERETFEGALKSGRQALEALGLGRYEARERADLFCHFNTRMVEEMAKGENDPLSRAAAYKRTSAMLSEIITEDREHLSLIQRHGWQGTAEGKHSGKAADEPEVKPSI</sequence>